<feature type="chain" id="PRO_0000142981" description="Porphobilinogen deaminase">
    <location>
        <begin position="1"/>
        <end position="351"/>
    </location>
</feature>
<feature type="domain" description="RPE1 insert">
    <location>
        <begin position="257"/>
        <end position="306"/>
    </location>
</feature>
<feature type="modified residue" description="S-(dipyrrolylmethanemethyl)cysteine" evidence="1">
    <location>
        <position position="242"/>
    </location>
</feature>
<protein>
    <recommendedName>
        <fullName evidence="1">Porphobilinogen deaminase</fullName>
        <shortName evidence="1">PBG</shortName>
        <ecNumber evidence="1">2.5.1.61</ecNumber>
    </recommendedName>
    <alternativeName>
        <fullName evidence="1">Hydroxymethylbilane synthase</fullName>
        <shortName evidence="1">HMBS</shortName>
    </alternativeName>
    <alternativeName>
        <fullName evidence="1">Pre-uroporphyrinogen synthase</fullName>
    </alternativeName>
</protein>
<comment type="function">
    <text evidence="1">Tetrapolymerization of the monopyrrole PBG into the hydroxymethylbilane pre-uroporphyrinogen in several discrete steps.</text>
</comment>
<comment type="catalytic activity">
    <reaction evidence="1">
        <text>4 porphobilinogen + H2O = hydroxymethylbilane + 4 NH4(+)</text>
        <dbReference type="Rhea" id="RHEA:13185"/>
        <dbReference type="ChEBI" id="CHEBI:15377"/>
        <dbReference type="ChEBI" id="CHEBI:28938"/>
        <dbReference type="ChEBI" id="CHEBI:57845"/>
        <dbReference type="ChEBI" id="CHEBI:58126"/>
        <dbReference type="EC" id="2.5.1.61"/>
    </reaction>
</comment>
<comment type="cofactor">
    <cofactor evidence="1">
        <name>dipyrromethane</name>
        <dbReference type="ChEBI" id="CHEBI:60342"/>
    </cofactor>
    <text evidence="1">Binds 1 dipyrromethane group covalently.</text>
</comment>
<comment type="pathway">
    <text evidence="1">Porphyrin-containing compound metabolism; protoporphyrin-IX biosynthesis; coproporphyrinogen-III from 5-aminolevulinate: step 2/4.</text>
</comment>
<comment type="subunit">
    <text evidence="1">Monomer.</text>
</comment>
<comment type="miscellaneous">
    <text evidence="1">The porphobilinogen subunits are added to the dipyrromethane group.</text>
</comment>
<comment type="similarity">
    <text evidence="1">Belongs to the HMBS family.</text>
</comment>
<accession>Q92HR5</accession>
<reference key="1">
    <citation type="journal article" date="2001" name="Science">
        <title>Mechanisms of evolution in Rickettsia conorii and R. prowazekii.</title>
        <authorList>
            <person name="Ogata H."/>
            <person name="Audic S."/>
            <person name="Renesto-Audiffren P."/>
            <person name="Fournier P.-E."/>
            <person name="Barbe V."/>
            <person name="Samson D."/>
            <person name="Roux V."/>
            <person name="Cossart P."/>
            <person name="Weissenbach J."/>
            <person name="Claverie J.-M."/>
            <person name="Raoult D."/>
        </authorList>
    </citation>
    <scope>NUCLEOTIDE SEQUENCE [LARGE SCALE GENOMIC DNA]</scope>
    <source>
        <strain>ATCC VR-613 / Malish 7</strain>
    </source>
</reference>
<sequence length="351" mass="39311">MTNSIRIGTRKSPLALIHTNLVIQQIKQFFPDINCEIVPIITSGDLIQNKPLYDIGGKALFLKEIEQALLDKKIDLAVHSLKDVPGRMPEPLVIAAVLEREDPRDVFVCLKYKSIEELPQNAVIGSSAVRRKAFIQKIRPDLKVTVFRGNVDSRIKKLMTGEVDATILAYTGLKRLEVFNPEYCHLIEYSQMLPCIGQGVIAVEIRKDDNAMLEICNQINHLPTFELIKPERAFLEYLDANCRTPIAAYSQYLDANPRHLSKLAYREVLEGNTEALATAAYKSNRTDASTGLTYKLPLEVEFGKVSNIQTNFMLGNLDGSKITFHTETTNIKTSTEAGIKAAKMMLEAICK</sequence>
<gene>
    <name evidence="1" type="primary">hemC</name>
    <name type="ordered locus">RC0706</name>
</gene>
<proteinExistence type="inferred from homology"/>
<name>HEM3_RICCN</name>
<evidence type="ECO:0000255" key="1">
    <source>
        <dbReference type="HAMAP-Rule" id="MF_00260"/>
    </source>
</evidence>
<keyword id="KW-0627">Porphyrin biosynthesis</keyword>
<keyword id="KW-0808">Transferase</keyword>
<organism>
    <name type="scientific">Rickettsia conorii (strain ATCC VR-613 / Malish 7)</name>
    <dbReference type="NCBI Taxonomy" id="272944"/>
    <lineage>
        <taxon>Bacteria</taxon>
        <taxon>Pseudomonadati</taxon>
        <taxon>Pseudomonadota</taxon>
        <taxon>Alphaproteobacteria</taxon>
        <taxon>Rickettsiales</taxon>
        <taxon>Rickettsiaceae</taxon>
        <taxon>Rickettsieae</taxon>
        <taxon>Rickettsia</taxon>
        <taxon>spotted fever group</taxon>
    </lineage>
</organism>
<dbReference type="EC" id="2.5.1.61" evidence="1"/>
<dbReference type="EMBL" id="AE006914">
    <property type="protein sequence ID" value="AAL03244.1"/>
    <property type="molecule type" value="Genomic_DNA"/>
</dbReference>
<dbReference type="PIR" id="B97788">
    <property type="entry name" value="B97788"/>
</dbReference>
<dbReference type="RefSeq" id="WP_010977327.1">
    <property type="nucleotide sequence ID" value="NC_003103.1"/>
</dbReference>
<dbReference type="SMR" id="Q92HR5"/>
<dbReference type="GeneID" id="928735"/>
<dbReference type="KEGG" id="rco:RC0706"/>
<dbReference type="PATRIC" id="fig|272944.4.peg.803"/>
<dbReference type="HOGENOM" id="CLU_019704_0_2_5"/>
<dbReference type="UniPathway" id="UPA00251">
    <property type="reaction ID" value="UER00319"/>
</dbReference>
<dbReference type="Proteomes" id="UP000000816">
    <property type="component" value="Chromosome"/>
</dbReference>
<dbReference type="GO" id="GO:0005737">
    <property type="term" value="C:cytoplasm"/>
    <property type="evidence" value="ECO:0007669"/>
    <property type="project" value="TreeGrafter"/>
</dbReference>
<dbReference type="GO" id="GO:0004418">
    <property type="term" value="F:hydroxymethylbilane synthase activity"/>
    <property type="evidence" value="ECO:0007669"/>
    <property type="project" value="UniProtKB-UniRule"/>
</dbReference>
<dbReference type="GO" id="GO:0006782">
    <property type="term" value="P:protoporphyrinogen IX biosynthetic process"/>
    <property type="evidence" value="ECO:0007669"/>
    <property type="project" value="UniProtKB-UniRule"/>
</dbReference>
<dbReference type="CDD" id="cd13647">
    <property type="entry name" value="PBP2_PBGD_2"/>
    <property type="match status" value="1"/>
</dbReference>
<dbReference type="FunFam" id="3.40.190.10:FF:000004">
    <property type="entry name" value="Porphobilinogen deaminase"/>
    <property type="match status" value="1"/>
</dbReference>
<dbReference type="FunFam" id="3.40.190.10:FF:000005">
    <property type="entry name" value="Porphobilinogen deaminase"/>
    <property type="match status" value="1"/>
</dbReference>
<dbReference type="Gene3D" id="3.40.190.10">
    <property type="entry name" value="Periplasmic binding protein-like II"/>
    <property type="match status" value="2"/>
</dbReference>
<dbReference type="Gene3D" id="3.30.160.40">
    <property type="entry name" value="Porphobilinogen deaminase, C-terminal domain"/>
    <property type="match status" value="1"/>
</dbReference>
<dbReference type="HAMAP" id="MF_00260">
    <property type="entry name" value="Porphobil_deam"/>
    <property type="match status" value="1"/>
</dbReference>
<dbReference type="InterPro" id="IPR000860">
    <property type="entry name" value="HemC"/>
</dbReference>
<dbReference type="InterPro" id="IPR022419">
    <property type="entry name" value="Porphobilin_deaminase_cofac_BS"/>
</dbReference>
<dbReference type="InterPro" id="IPR022417">
    <property type="entry name" value="Porphobilin_deaminase_N"/>
</dbReference>
<dbReference type="InterPro" id="IPR022418">
    <property type="entry name" value="Porphobilinogen_deaminase_C"/>
</dbReference>
<dbReference type="InterPro" id="IPR036803">
    <property type="entry name" value="Porphobilinogen_deaminase_C_sf"/>
</dbReference>
<dbReference type="InterPro" id="IPR005728">
    <property type="entry name" value="RPE1"/>
</dbReference>
<dbReference type="NCBIfam" id="TIGR00212">
    <property type="entry name" value="hemC"/>
    <property type="match status" value="1"/>
</dbReference>
<dbReference type="NCBIfam" id="TIGR01045">
    <property type="entry name" value="RPE1"/>
    <property type="match status" value="1"/>
</dbReference>
<dbReference type="PANTHER" id="PTHR11557">
    <property type="entry name" value="PORPHOBILINOGEN DEAMINASE"/>
    <property type="match status" value="1"/>
</dbReference>
<dbReference type="PANTHER" id="PTHR11557:SF0">
    <property type="entry name" value="PORPHOBILINOGEN DEAMINASE"/>
    <property type="match status" value="1"/>
</dbReference>
<dbReference type="Pfam" id="PF01379">
    <property type="entry name" value="Porphobil_deam"/>
    <property type="match status" value="1"/>
</dbReference>
<dbReference type="Pfam" id="PF03900">
    <property type="entry name" value="Porphobil_deamC"/>
    <property type="match status" value="1"/>
</dbReference>
<dbReference type="PIRSF" id="PIRSF001438">
    <property type="entry name" value="4pyrrol_synth_OHMeBilane_synth"/>
    <property type="match status" value="1"/>
</dbReference>
<dbReference type="PRINTS" id="PR00151">
    <property type="entry name" value="PORPHBDMNASE"/>
</dbReference>
<dbReference type="SUPFAM" id="SSF53850">
    <property type="entry name" value="Periplasmic binding protein-like II"/>
    <property type="match status" value="1"/>
</dbReference>
<dbReference type="SUPFAM" id="SSF54782">
    <property type="entry name" value="Porphobilinogen deaminase (hydroxymethylbilane synthase), C-terminal domain"/>
    <property type="match status" value="1"/>
</dbReference>
<dbReference type="PROSITE" id="PS00533">
    <property type="entry name" value="PORPHOBILINOGEN_DEAM"/>
    <property type="match status" value="1"/>
</dbReference>